<gene>
    <name type="primary">spa1</name>
</gene>
<feature type="chain" id="PRO_0000220869" description="Ornithine decarboxylase antizyme">
    <location>
        <begin position="1"/>
        <end position="224"/>
    </location>
</feature>
<comment type="function">
    <text evidence="1">Ornithine decarboxylase (ODC) antizyme protein that negatively regulates ODC activity and intracellular polyamine biosynthesis in response to increased intracellular polyamine levels. Binds to ODC monomers, inhibiting the assembly of the functional ODC homodimer, and targets the monomers for ubiquitin-independent proteolytic destruction by the 26S proteasome.</text>
</comment>
<comment type="subunit">
    <text evidence="1">Interacts with ODC and thereby sterically blocks ODC homodimerization.</text>
</comment>
<comment type="alternative products">
    <event type="ribosomal frameshifting"/>
    <isoform>
        <id>Q9HFU8-1</id>
        <name>1</name>
        <sequence type="displayed"/>
    </isoform>
    <text>A ribosomal frameshift occurs between the codons for Ser-65 and Glu-66. An autoregulatory mechanism enables modulation of frameshifting according to the cellular concentration of polyamines.</text>
</comment>
<comment type="similarity">
    <text evidence="2">Belongs to the ODC antizyme family.</text>
</comment>
<protein>
    <recommendedName>
        <fullName>Ornithine decarboxylase antizyme</fullName>
        <shortName>ODC-Az</shortName>
    </recommendedName>
</protein>
<name>OAZ_SCHOT</name>
<reference key="1">
    <citation type="journal article" date="2000" name="Nucleic Acids Res.">
        <title>Antizyme expression: a subversion of triplet decoding, which is remarkably conserved by evolution, is a sensor for an autoregulatory circuit.</title>
        <authorList>
            <person name="Ivanov I.P."/>
            <person name="Gesteland R.F."/>
            <person name="Atkins J.F."/>
        </authorList>
    </citation>
    <scope>NUCLEOTIDE SEQUENCE [GENOMIC DNA]</scope>
</reference>
<sequence>MAFRNPMYQLSNVDDIDSEVLNSRFLSETKDDGFSRRRTTLAVCATKKDLYLYGTTPAGGAEWCSEVLERTRPRIAHKRQRRRHVPRWISDSFRTCLPSPSGKWKEQTANEGEGRVKSSWLAACDERIGIAEPTNYWHGIVRTEDDSSKTLYLIPETWEDVHLKEGFVAIIDLAAERLQCSKLILFVDKNLSALSYLVKSLHWVGFEPVPHLDCVDHVLFGMEL</sequence>
<accession>Q9HFU8</accession>
<proteinExistence type="inferred from homology"/>
<evidence type="ECO:0000250" key="1">
    <source>
        <dbReference type="UniProtKB" id="Q02803"/>
    </source>
</evidence>
<evidence type="ECO:0000305" key="2"/>
<organism>
    <name type="scientific">Schizosaccharomyces octosporus</name>
    <name type="common">Fission yeast</name>
    <name type="synonym">Octosporomyces octosporus</name>
    <dbReference type="NCBI Taxonomy" id="4899"/>
    <lineage>
        <taxon>Eukaryota</taxon>
        <taxon>Fungi</taxon>
        <taxon>Dikarya</taxon>
        <taxon>Ascomycota</taxon>
        <taxon>Taphrinomycotina</taxon>
        <taxon>Schizosaccharomycetes</taxon>
        <taxon>Schizosaccharomycetales</taxon>
        <taxon>Schizosaccharomycetaceae</taxon>
        <taxon>Schizosaccharomyces</taxon>
    </lineage>
</organism>
<dbReference type="EMBL" id="AF291573">
    <property type="protein sequence ID" value="AAG16233.1"/>
    <property type="molecule type" value="Genomic_DNA"/>
</dbReference>
<dbReference type="VEuPathDB" id="FungiDB:SOCG_04402"/>
<dbReference type="GO" id="GO:0005737">
    <property type="term" value="C:cytoplasm"/>
    <property type="evidence" value="ECO:0007669"/>
    <property type="project" value="TreeGrafter"/>
</dbReference>
<dbReference type="GO" id="GO:0005634">
    <property type="term" value="C:nucleus"/>
    <property type="evidence" value="ECO:0007669"/>
    <property type="project" value="TreeGrafter"/>
</dbReference>
<dbReference type="GO" id="GO:0008073">
    <property type="term" value="F:ornithine decarboxylase inhibitor activity"/>
    <property type="evidence" value="ECO:0007669"/>
    <property type="project" value="InterPro"/>
</dbReference>
<dbReference type="GO" id="GO:0045732">
    <property type="term" value="P:positive regulation of protein catabolic process"/>
    <property type="evidence" value="ECO:0007669"/>
    <property type="project" value="TreeGrafter"/>
</dbReference>
<dbReference type="GO" id="GO:0075523">
    <property type="term" value="P:viral translational frameshifting"/>
    <property type="evidence" value="ECO:0007669"/>
    <property type="project" value="UniProtKB-KW"/>
</dbReference>
<dbReference type="Gene3D" id="3.40.630.60">
    <property type="match status" value="1"/>
</dbReference>
<dbReference type="InterPro" id="IPR016181">
    <property type="entry name" value="Acyl_CoA_acyltransferase"/>
</dbReference>
<dbReference type="InterPro" id="IPR002993">
    <property type="entry name" value="ODC_AZ"/>
</dbReference>
<dbReference type="InterPro" id="IPR038581">
    <property type="entry name" value="ODC_AZ_sf"/>
</dbReference>
<dbReference type="PANTHER" id="PTHR10279">
    <property type="entry name" value="ORNITHINE DECARBOXYLASE ANTIZYME"/>
    <property type="match status" value="1"/>
</dbReference>
<dbReference type="PANTHER" id="PTHR10279:SF10">
    <property type="entry name" value="ORNITHINE DECARBOXYLASE ANTIZYME"/>
    <property type="match status" value="1"/>
</dbReference>
<dbReference type="Pfam" id="PF02100">
    <property type="entry name" value="ODC_AZ"/>
    <property type="match status" value="1"/>
</dbReference>
<dbReference type="SUPFAM" id="SSF55729">
    <property type="entry name" value="Acyl-CoA N-acyltransferases (Nat)"/>
    <property type="match status" value="1"/>
</dbReference>
<keyword id="KW-0688">Ribosomal frameshifting</keyword>